<proteinExistence type="inferred from homology"/>
<sequence length="54" mass="6326">MAKIRPPKPKRMGRGAQRCQRCGTRDAVIQKYGLYLCRQCFREIAPTLGFRKNR</sequence>
<reference key="1">
    <citation type="journal article" date="1999" name="DNA Res.">
        <title>Complete genome sequence of an aerobic hyper-thermophilic crenarchaeon, Aeropyrum pernix K1.</title>
        <authorList>
            <person name="Kawarabayasi Y."/>
            <person name="Hino Y."/>
            <person name="Horikawa H."/>
            <person name="Yamazaki S."/>
            <person name="Haikawa Y."/>
            <person name="Jin-no K."/>
            <person name="Takahashi M."/>
            <person name="Sekine M."/>
            <person name="Baba S."/>
            <person name="Ankai A."/>
            <person name="Kosugi H."/>
            <person name="Hosoyama A."/>
            <person name="Fukui S."/>
            <person name="Nagai Y."/>
            <person name="Nishijima K."/>
            <person name="Nakazawa H."/>
            <person name="Takamiya M."/>
            <person name="Masuda S."/>
            <person name="Funahashi T."/>
            <person name="Tanaka T."/>
            <person name="Kudoh Y."/>
            <person name="Yamazaki J."/>
            <person name="Kushida N."/>
            <person name="Oguchi A."/>
            <person name="Aoki K."/>
            <person name="Kubota K."/>
            <person name="Nakamura Y."/>
            <person name="Nomura N."/>
            <person name="Sako Y."/>
            <person name="Kikuchi H."/>
        </authorList>
    </citation>
    <scope>NUCLEOTIDE SEQUENCE [LARGE SCALE GENOMIC DNA]</scope>
    <source>
        <strain>ATCC 700893 / DSM 11879 / JCM 9820 / NBRC 100138 / K1</strain>
    </source>
</reference>
<protein>
    <recommendedName>
        <fullName evidence="1">Small ribosomal subunit protein uS14</fullName>
    </recommendedName>
    <alternativeName>
        <fullName evidence="2">30S ribosomal protein S14 type Z</fullName>
    </alternativeName>
</protein>
<accession>P58731</accession>
<accession>Q05E77</accession>
<keyword id="KW-0479">Metal-binding</keyword>
<keyword id="KW-1185">Reference proteome</keyword>
<keyword id="KW-0687">Ribonucleoprotein</keyword>
<keyword id="KW-0689">Ribosomal protein</keyword>
<keyword id="KW-0694">RNA-binding</keyword>
<keyword id="KW-0699">rRNA-binding</keyword>
<keyword id="KW-0862">Zinc</keyword>
<gene>
    <name evidence="1" type="primary">rps14</name>
    <name type="ordered locus">APE_0352a</name>
</gene>
<name>RS14Z_AERPE</name>
<organism>
    <name type="scientific">Aeropyrum pernix (strain ATCC 700893 / DSM 11879 / JCM 9820 / NBRC 100138 / K1)</name>
    <dbReference type="NCBI Taxonomy" id="272557"/>
    <lineage>
        <taxon>Archaea</taxon>
        <taxon>Thermoproteota</taxon>
        <taxon>Thermoprotei</taxon>
        <taxon>Desulfurococcales</taxon>
        <taxon>Desulfurococcaceae</taxon>
        <taxon>Aeropyrum</taxon>
    </lineage>
</organism>
<feature type="chain" id="PRO_0000130988" description="Small ribosomal subunit protein uS14">
    <location>
        <begin position="1"/>
        <end position="54"/>
    </location>
</feature>
<feature type="binding site" evidence="1">
    <location>
        <position position="19"/>
    </location>
    <ligand>
        <name>Zn(2+)</name>
        <dbReference type="ChEBI" id="CHEBI:29105"/>
    </ligand>
</feature>
<feature type="binding site" evidence="1">
    <location>
        <position position="22"/>
    </location>
    <ligand>
        <name>Zn(2+)</name>
        <dbReference type="ChEBI" id="CHEBI:29105"/>
    </ligand>
</feature>
<feature type="binding site" evidence="1">
    <location>
        <position position="37"/>
    </location>
    <ligand>
        <name>Zn(2+)</name>
        <dbReference type="ChEBI" id="CHEBI:29105"/>
    </ligand>
</feature>
<feature type="binding site" evidence="1">
    <location>
        <position position="40"/>
    </location>
    <ligand>
        <name>Zn(2+)</name>
        <dbReference type="ChEBI" id="CHEBI:29105"/>
    </ligand>
</feature>
<comment type="function">
    <text evidence="1">Binds 16S rRNA, required for the assembly of 30S particles.</text>
</comment>
<comment type="cofactor">
    <cofactor evidence="1">
        <name>Zn(2+)</name>
        <dbReference type="ChEBI" id="CHEBI:29105"/>
    </cofactor>
    <text evidence="1">Binds 1 zinc ion per subunit.</text>
</comment>
<comment type="subunit">
    <text evidence="1">Part of the 30S ribosomal subunit.</text>
</comment>
<comment type="similarity">
    <text evidence="1">Belongs to the universal ribosomal protein uS14 family. Zinc-binding uS14 subfamily.</text>
</comment>
<evidence type="ECO:0000255" key="1">
    <source>
        <dbReference type="HAMAP-Rule" id="MF_01364"/>
    </source>
</evidence>
<evidence type="ECO:0000305" key="2"/>
<dbReference type="EMBL" id="BA000002">
    <property type="protein sequence ID" value="BAF34724.1"/>
    <property type="molecule type" value="Genomic_DNA"/>
</dbReference>
<dbReference type="RefSeq" id="WP_010865686.1">
    <property type="nucleotide sequence ID" value="NC_000854.2"/>
</dbReference>
<dbReference type="SMR" id="P58731"/>
<dbReference type="STRING" id="272557.APE_0352a"/>
<dbReference type="EnsemblBacteria" id="BAF34724">
    <property type="protein sequence ID" value="BAF34724"/>
    <property type="gene ID" value="APE_0352a"/>
</dbReference>
<dbReference type="KEGG" id="ape:APE_0352a"/>
<dbReference type="PATRIC" id="fig|272557.25.peg.272"/>
<dbReference type="eggNOG" id="arCOG00782">
    <property type="taxonomic scope" value="Archaea"/>
</dbReference>
<dbReference type="Proteomes" id="UP000002518">
    <property type="component" value="Chromosome"/>
</dbReference>
<dbReference type="GO" id="GO:0022627">
    <property type="term" value="C:cytosolic small ribosomal subunit"/>
    <property type="evidence" value="ECO:0007669"/>
    <property type="project" value="TreeGrafter"/>
</dbReference>
<dbReference type="GO" id="GO:0019843">
    <property type="term" value="F:rRNA binding"/>
    <property type="evidence" value="ECO:0007669"/>
    <property type="project" value="UniProtKB-UniRule"/>
</dbReference>
<dbReference type="GO" id="GO:0003735">
    <property type="term" value="F:structural constituent of ribosome"/>
    <property type="evidence" value="ECO:0007669"/>
    <property type="project" value="InterPro"/>
</dbReference>
<dbReference type="GO" id="GO:0008270">
    <property type="term" value="F:zinc ion binding"/>
    <property type="evidence" value="ECO:0007669"/>
    <property type="project" value="UniProtKB-UniRule"/>
</dbReference>
<dbReference type="GO" id="GO:0002181">
    <property type="term" value="P:cytoplasmic translation"/>
    <property type="evidence" value="ECO:0007669"/>
    <property type="project" value="TreeGrafter"/>
</dbReference>
<dbReference type="FunFam" id="4.10.830.10:FF:000002">
    <property type="entry name" value="40S ribosomal protein S29"/>
    <property type="match status" value="1"/>
</dbReference>
<dbReference type="Gene3D" id="4.10.830.10">
    <property type="entry name" value="30s Ribosomal Protein S14, Chain N"/>
    <property type="match status" value="1"/>
</dbReference>
<dbReference type="HAMAP" id="MF_01364_A">
    <property type="entry name" value="Ribosomal_uS14_2_A"/>
    <property type="match status" value="1"/>
</dbReference>
<dbReference type="InterPro" id="IPR001209">
    <property type="entry name" value="Ribosomal_uS14"/>
</dbReference>
<dbReference type="InterPro" id="IPR023676">
    <property type="entry name" value="Ribosomal_uS14_arc"/>
</dbReference>
<dbReference type="InterPro" id="IPR018271">
    <property type="entry name" value="Ribosomal_uS14_CS"/>
</dbReference>
<dbReference type="InterPro" id="IPR039744">
    <property type="entry name" value="RIbosomal_uS14_euk_arc"/>
</dbReference>
<dbReference type="InterPro" id="IPR043140">
    <property type="entry name" value="Ribosomal_uS14_sf"/>
</dbReference>
<dbReference type="NCBIfam" id="NF004424">
    <property type="entry name" value="PRK05766.1"/>
    <property type="match status" value="1"/>
</dbReference>
<dbReference type="PANTHER" id="PTHR12010">
    <property type="entry name" value="40S RIBOSOMAL PROTEIN S29"/>
    <property type="match status" value="1"/>
</dbReference>
<dbReference type="PANTHER" id="PTHR12010:SF2">
    <property type="entry name" value="40S RIBOSOMAL PROTEIN S29"/>
    <property type="match status" value="1"/>
</dbReference>
<dbReference type="Pfam" id="PF00253">
    <property type="entry name" value="Ribosomal_S14"/>
    <property type="match status" value="1"/>
</dbReference>
<dbReference type="SUPFAM" id="SSF57716">
    <property type="entry name" value="Glucocorticoid receptor-like (DNA-binding domain)"/>
    <property type="match status" value="1"/>
</dbReference>
<dbReference type="PROSITE" id="PS00527">
    <property type="entry name" value="RIBOSOMAL_S14"/>
    <property type="match status" value="1"/>
</dbReference>